<keyword id="KW-0539">Nucleus</keyword>
<keyword id="KW-1185">Reference proteome</keyword>
<keyword id="KW-0678">Repressor</keyword>
<keyword id="KW-0694">RNA-binding</keyword>
<keyword id="KW-0804">Transcription</keyword>
<keyword id="KW-0805">Transcription regulation</keyword>
<sequence>MAGAAPGAIMDEDYFGSAAEWGDEADGGQQEDDYGEGEDDAEVQQECLHKFSTRDYIMEPSIFNTLKRYFQAGGSPENVIQLLSENYTAVAQTVNLLAEWLIQTGVEPVQVQETVENHLKSLLIKHFDPRKADSIFTEEGETPAWLEQMIAHTTWRDLFYKLAEAHPDCLMLNFTVKLISDAGYQGEITSVSTACQQLEVFSRVLRTSLATILDGGEENLEKHLPEFAKMVCHGEHTYLFAQAMMSVLAQEEQGGSAVRRVAQEVQRFAQEKGHDASQITLALGTAASYPRACQALGAMLSKGALNPADITVLFKMFTSMDPPPVELIRVPAFLDLFMQSLFKPGARINQDHKHKYIHILAYAASVVETWKKNKRVSINKDELKSTSKAVETVHNLCCNENKGASELVAELSTLYQCIRFPVVAMGVLKWVDWTVSEPRYFQLQTDHTPVHLALLDEISTCHQLLHPQVLQLLVKLFETEHSQLDVMEQLELKKTLLDRMVHLLSRGHVLPVVSYIRKCLEKLDTDISLIRHFVTEVLDVIAPPYTSDFVQLFLPILENDSIAGTIKTEGEHDPVTEFIAHCKSNFILVN</sequence>
<comment type="function">
    <text evidence="1">Essential component of the NELF complex, a complex that negatively regulates the elongation of transcription by RNA polymerase II (By similarity). The NELF complex, which acts via an association with the DSIF complex and causes transcriptional pausing, is counteracted by the P-TEFb kinase complex (By similarity).</text>
</comment>
<comment type="subunit">
    <text evidence="1 2">The NELF complex is composed of NELFA, NELFB, NELFCD and NELFE; NELFA and NELFCD form a stable subcomplex that binds primarily through NELFCD to the N-terminus of NELFB (By similarity). Binds RNA which may help to stabilize the NELF complex on nucleic acid (By similarity). In vitro, the NELFA:NELFCD subcomplex binds to ssDNA and ssRNA in a sequence- and structure-dependent manner (By similarity). Interacts with ARAF1 (By similarity). Interacts with PCF11 (By similarity). Interacts with NELFB (By similarity). Interacts with KAT8 (By similarity).</text>
</comment>
<comment type="subcellular location">
    <subcellularLocation>
        <location evidence="1">Nucleus</location>
    </subcellularLocation>
</comment>
<comment type="similarity">
    <text evidence="4">Belongs to the NELF-D family.</text>
</comment>
<dbReference type="EMBL" id="CR956646">
    <property type="protein sequence ID" value="CAN13211.1"/>
    <property type="molecule type" value="Genomic_DNA"/>
</dbReference>
<dbReference type="EMBL" id="CR956646">
    <property type="protein sequence ID" value="CAN13212.1"/>
    <property type="molecule type" value="Genomic_DNA"/>
</dbReference>
<dbReference type="RefSeq" id="NP_001107170.1">
    <property type="nucleotide sequence ID" value="NM_001113698.1"/>
</dbReference>
<dbReference type="RefSeq" id="XP_005673120.1">
    <property type="nucleotide sequence ID" value="XM_005673063.3"/>
</dbReference>
<dbReference type="SMR" id="A5GFY4"/>
<dbReference type="FunCoup" id="A5GFY4">
    <property type="interactions" value="2942"/>
</dbReference>
<dbReference type="STRING" id="9823.ENSSSCP00000033095"/>
<dbReference type="PaxDb" id="9823-ENSSSCP00000008029"/>
<dbReference type="PeptideAtlas" id="A5GFY4"/>
<dbReference type="Ensembl" id="ENSSSCT00060053771.1">
    <property type="protein sequence ID" value="ENSSSCP00060022918.1"/>
    <property type="gene ID" value="ENSSSCG00060039723.1"/>
</dbReference>
<dbReference type="Ensembl" id="ENSSSCT00060053840.1">
    <property type="protein sequence ID" value="ENSSSCP00060022956.1"/>
    <property type="gene ID" value="ENSSSCG00060039723.1"/>
</dbReference>
<dbReference type="GeneID" id="100134985"/>
<dbReference type="KEGG" id="ssc:100134985"/>
<dbReference type="CTD" id="51497"/>
<dbReference type="eggNOG" id="ENOG502QPUE">
    <property type="taxonomic scope" value="Eukaryota"/>
</dbReference>
<dbReference type="HOGENOM" id="CLU_028060_0_0_1"/>
<dbReference type="InParanoid" id="A5GFY4"/>
<dbReference type="OrthoDB" id="511287at2759"/>
<dbReference type="TreeFam" id="TF324118"/>
<dbReference type="Reactome" id="R-SSC-112382">
    <property type="pathway name" value="Formation of RNA Pol II elongation complex"/>
</dbReference>
<dbReference type="Reactome" id="R-SSC-113418">
    <property type="pathway name" value="Formation of the Early Elongation Complex"/>
</dbReference>
<dbReference type="Reactome" id="R-SSC-674695">
    <property type="pathway name" value="RNA Polymerase II Pre-transcription Events"/>
</dbReference>
<dbReference type="Reactome" id="R-SSC-6796648">
    <property type="pathway name" value="TP53 Regulates Transcription of DNA Repair Genes"/>
</dbReference>
<dbReference type="Reactome" id="R-SSC-75955">
    <property type="pathway name" value="RNA Polymerase II Transcription Elongation"/>
</dbReference>
<dbReference type="Proteomes" id="UP000008227">
    <property type="component" value="Unplaced"/>
</dbReference>
<dbReference type="Proteomes" id="UP000314985">
    <property type="component" value="Unplaced"/>
</dbReference>
<dbReference type="Proteomes" id="UP000694570">
    <property type="component" value="Unplaced"/>
</dbReference>
<dbReference type="Proteomes" id="UP000694571">
    <property type="component" value="Unplaced"/>
</dbReference>
<dbReference type="Proteomes" id="UP000694720">
    <property type="component" value="Unplaced"/>
</dbReference>
<dbReference type="Proteomes" id="UP000694722">
    <property type="component" value="Unplaced"/>
</dbReference>
<dbReference type="Proteomes" id="UP000694723">
    <property type="component" value="Unplaced"/>
</dbReference>
<dbReference type="Proteomes" id="UP000694724">
    <property type="component" value="Unplaced"/>
</dbReference>
<dbReference type="Proteomes" id="UP000694725">
    <property type="component" value="Unplaced"/>
</dbReference>
<dbReference type="Proteomes" id="UP000694726">
    <property type="component" value="Unplaced"/>
</dbReference>
<dbReference type="Proteomes" id="UP000694727">
    <property type="component" value="Unplaced"/>
</dbReference>
<dbReference type="Proteomes" id="UP000694728">
    <property type="component" value="Unplaced"/>
</dbReference>
<dbReference type="GO" id="GO:0032021">
    <property type="term" value="C:NELF complex"/>
    <property type="evidence" value="ECO:0000318"/>
    <property type="project" value="GO_Central"/>
</dbReference>
<dbReference type="GO" id="GO:0003723">
    <property type="term" value="F:RNA binding"/>
    <property type="evidence" value="ECO:0000318"/>
    <property type="project" value="GO_Central"/>
</dbReference>
<dbReference type="GO" id="GO:0034244">
    <property type="term" value="P:negative regulation of transcription elongation by RNA polymerase II"/>
    <property type="evidence" value="ECO:0000318"/>
    <property type="project" value="GO_Central"/>
</dbReference>
<dbReference type="InterPro" id="IPR006942">
    <property type="entry name" value="TH1"/>
</dbReference>
<dbReference type="PANTHER" id="PTHR12144:SF0">
    <property type="entry name" value="NEGATIVE ELONGATION FACTOR C_D"/>
    <property type="match status" value="1"/>
</dbReference>
<dbReference type="PANTHER" id="PTHR12144">
    <property type="entry name" value="NEGATIVE ELONGATION FACTOR D"/>
    <property type="match status" value="1"/>
</dbReference>
<dbReference type="Pfam" id="PF04858">
    <property type="entry name" value="TH1"/>
    <property type="match status" value="1"/>
</dbReference>
<proteinExistence type="inferred from homology"/>
<feature type="chain" id="PRO_0000312639" description="Negative elongation factor D">
    <location>
        <begin position="1"/>
        <end position="590"/>
    </location>
</feature>
<feature type="region of interest" description="Disordered" evidence="3">
    <location>
        <begin position="15"/>
        <end position="43"/>
    </location>
</feature>
<feature type="compositionally biased region" description="Acidic residues" evidence="3">
    <location>
        <begin position="21"/>
        <end position="43"/>
    </location>
</feature>
<feature type="sequence conflict" description="In Ref. 1; CAN13211." evidence="4" ref="1">
    <original>G</original>
    <variation>GQ</variation>
    <location>
        <position position="28"/>
    </location>
</feature>
<evidence type="ECO:0000250" key="1">
    <source>
        <dbReference type="UniProtKB" id="Q8IXH7"/>
    </source>
</evidence>
<evidence type="ECO:0000250" key="2">
    <source>
        <dbReference type="UniProtKB" id="Q922L6"/>
    </source>
</evidence>
<evidence type="ECO:0000256" key="3">
    <source>
        <dbReference type="SAM" id="MobiDB-lite"/>
    </source>
</evidence>
<evidence type="ECO:0000305" key="4"/>
<accession>A5GFY4</accession>
<accession>A5GFY3</accession>
<name>NELFD_PIG</name>
<reference key="1">
    <citation type="submission" date="2007-05" db="EMBL/GenBank/DDBJ databases">
        <authorList>
            <consortium name="Porcine genome sequencing project"/>
        </authorList>
    </citation>
    <scope>NUCLEOTIDE SEQUENCE [LARGE SCALE GENOMIC DNA]</scope>
</reference>
<organism>
    <name type="scientific">Sus scrofa</name>
    <name type="common">Pig</name>
    <dbReference type="NCBI Taxonomy" id="9823"/>
    <lineage>
        <taxon>Eukaryota</taxon>
        <taxon>Metazoa</taxon>
        <taxon>Chordata</taxon>
        <taxon>Craniata</taxon>
        <taxon>Vertebrata</taxon>
        <taxon>Euteleostomi</taxon>
        <taxon>Mammalia</taxon>
        <taxon>Eutheria</taxon>
        <taxon>Laurasiatheria</taxon>
        <taxon>Artiodactyla</taxon>
        <taxon>Suina</taxon>
        <taxon>Suidae</taxon>
        <taxon>Sus</taxon>
    </lineage>
</organism>
<protein>
    <recommendedName>
        <fullName>Negative elongation factor D</fullName>
        <shortName>NELF-D</shortName>
    </recommendedName>
    <alternativeName>
        <fullName>TH1-like protein</fullName>
    </alternativeName>
</protein>
<gene>
    <name type="primary">NELFCD</name>
    <name type="synonym">NELFD</name>
    <name type="synonym">TH1L</name>
</gene>